<reference key="1">
    <citation type="journal article" date="2003" name="Nat. Genet.">
        <title>Comparative analysis of the genome sequences of Bordetella pertussis, Bordetella parapertussis and Bordetella bronchiseptica.</title>
        <authorList>
            <person name="Parkhill J."/>
            <person name="Sebaihia M."/>
            <person name="Preston A."/>
            <person name="Murphy L.D."/>
            <person name="Thomson N.R."/>
            <person name="Harris D.E."/>
            <person name="Holden M.T.G."/>
            <person name="Churcher C.M."/>
            <person name="Bentley S.D."/>
            <person name="Mungall K.L."/>
            <person name="Cerdeno-Tarraga A.-M."/>
            <person name="Temple L."/>
            <person name="James K.D."/>
            <person name="Harris B."/>
            <person name="Quail M.A."/>
            <person name="Achtman M."/>
            <person name="Atkin R."/>
            <person name="Baker S."/>
            <person name="Basham D."/>
            <person name="Bason N."/>
            <person name="Cherevach I."/>
            <person name="Chillingworth T."/>
            <person name="Collins M."/>
            <person name="Cronin A."/>
            <person name="Davis P."/>
            <person name="Doggett J."/>
            <person name="Feltwell T."/>
            <person name="Goble A."/>
            <person name="Hamlin N."/>
            <person name="Hauser H."/>
            <person name="Holroyd S."/>
            <person name="Jagels K."/>
            <person name="Leather S."/>
            <person name="Moule S."/>
            <person name="Norberczak H."/>
            <person name="O'Neil S."/>
            <person name="Ormond D."/>
            <person name="Price C."/>
            <person name="Rabbinowitsch E."/>
            <person name="Rutter S."/>
            <person name="Sanders M."/>
            <person name="Saunders D."/>
            <person name="Seeger K."/>
            <person name="Sharp S."/>
            <person name="Simmonds M."/>
            <person name="Skelton J."/>
            <person name="Squares R."/>
            <person name="Squares S."/>
            <person name="Stevens K."/>
            <person name="Unwin L."/>
            <person name="Whitehead S."/>
            <person name="Barrell B.G."/>
            <person name="Maskell D.J."/>
        </authorList>
    </citation>
    <scope>NUCLEOTIDE SEQUENCE [LARGE SCALE GENOMIC DNA]</scope>
    <source>
        <strain>ATCC BAA-588 / NCTC 13252 / RB50</strain>
    </source>
</reference>
<sequence length="313" mass="35134">MTPPTTQNGPLRHFLQFKDFSPAEIAYVLERTRIIKDKFKRYEPHMPLHDRTLAMVFEKASTRTRVSFEAGMYQMGGSVINLTSNDSQLGRSEPIEDTARVISRMVDIVMIRTFEQTRIERFASHSRVPVINGLTNEYHPCQILADIFTYIEHRGPIAGKTVAWIGDANNMSYTWLQAAEMLGFTLHVSTPAGYELDPARIGAPAAGVLKQFKDPMQACQGAHLVTTDVWTSMGYEAENEERRAAFADWCVDAEMMAAADPQAVFMHCLPAHRGEEVTGEVIDGAQSVVWDEAENRLHVQKALMEFLLLGQLA</sequence>
<proteinExistence type="inferred from homology"/>
<name>OTC_BORBR</name>
<feature type="chain" id="PRO_0000112889" description="Ornithine carbamoyltransferase">
    <location>
        <begin position="1"/>
        <end position="313"/>
    </location>
</feature>
<feature type="binding site" evidence="2">
    <location>
        <begin position="61"/>
        <end position="64"/>
    </location>
    <ligand>
        <name>carbamoyl phosphate</name>
        <dbReference type="ChEBI" id="CHEBI:58228"/>
    </ligand>
</feature>
<feature type="binding site" evidence="2">
    <location>
        <position position="88"/>
    </location>
    <ligand>
        <name>carbamoyl phosphate</name>
        <dbReference type="ChEBI" id="CHEBI:58228"/>
    </ligand>
</feature>
<feature type="binding site" evidence="2">
    <location>
        <position position="112"/>
    </location>
    <ligand>
        <name>carbamoyl phosphate</name>
        <dbReference type="ChEBI" id="CHEBI:58228"/>
    </ligand>
</feature>
<feature type="binding site" evidence="2">
    <location>
        <begin position="139"/>
        <end position="142"/>
    </location>
    <ligand>
        <name>carbamoyl phosphate</name>
        <dbReference type="ChEBI" id="CHEBI:58228"/>
    </ligand>
</feature>
<feature type="binding site" evidence="2">
    <location>
        <position position="170"/>
    </location>
    <ligand>
        <name>L-ornithine</name>
        <dbReference type="ChEBI" id="CHEBI:46911"/>
    </ligand>
</feature>
<feature type="binding site" evidence="2">
    <location>
        <position position="228"/>
    </location>
    <ligand>
        <name>L-ornithine</name>
        <dbReference type="ChEBI" id="CHEBI:46911"/>
    </ligand>
</feature>
<feature type="binding site" evidence="2">
    <location>
        <begin position="232"/>
        <end position="233"/>
    </location>
    <ligand>
        <name>L-ornithine</name>
        <dbReference type="ChEBI" id="CHEBI:46911"/>
    </ligand>
</feature>
<feature type="binding site" evidence="2">
    <location>
        <begin position="268"/>
        <end position="269"/>
    </location>
    <ligand>
        <name>carbamoyl phosphate</name>
        <dbReference type="ChEBI" id="CHEBI:58228"/>
    </ligand>
</feature>
<feature type="binding site" evidence="2">
    <location>
        <position position="296"/>
    </location>
    <ligand>
        <name>carbamoyl phosphate</name>
        <dbReference type="ChEBI" id="CHEBI:58228"/>
    </ligand>
</feature>
<protein>
    <recommendedName>
        <fullName evidence="2">Ornithine carbamoyltransferase</fullName>
        <shortName evidence="2">OTCase</shortName>
        <ecNumber evidence="2">2.1.3.3</ecNumber>
    </recommendedName>
</protein>
<organism>
    <name type="scientific">Bordetella bronchiseptica (strain ATCC BAA-588 / NCTC 13252 / RB50)</name>
    <name type="common">Alcaligenes bronchisepticus</name>
    <dbReference type="NCBI Taxonomy" id="257310"/>
    <lineage>
        <taxon>Bacteria</taxon>
        <taxon>Pseudomonadati</taxon>
        <taxon>Pseudomonadota</taxon>
        <taxon>Betaproteobacteria</taxon>
        <taxon>Burkholderiales</taxon>
        <taxon>Alcaligenaceae</taxon>
        <taxon>Bordetella</taxon>
    </lineage>
</organism>
<comment type="function">
    <text evidence="1">Reversibly catalyzes the transfer of the carbamoyl group from carbamoyl phosphate (CP) to the N(epsilon) atom of ornithine (ORN) to produce L-citrulline.</text>
</comment>
<comment type="catalytic activity">
    <reaction evidence="2">
        <text>carbamoyl phosphate + L-ornithine = L-citrulline + phosphate + H(+)</text>
        <dbReference type="Rhea" id="RHEA:19513"/>
        <dbReference type="ChEBI" id="CHEBI:15378"/>
        <dbReference type="ChEBI" id="CHEBI:43474"/>
        <dbReference type="ChEBI" id="CHEBI:46911"/>
        <dbReference type="ChEBI" id="CHEBI:57743"/>
        <dbReference type="ChEBI" id="CHEBI:58228"/>
        <dbReference type="EC" id="2.1.3.3"/>
    </reaction>
</comment>
<comment type="pathway">
    <text evidence="2">Amino-acid biosynthesis; L-arginine biosynthesis; L-arginine from L-ornithine and carbamoyl phosphate: step 1/3.</text>
</comment>
<comment type="subcellular location">
    <subcellularLocation>
        <location evidence="2">Cytoplasm</location>
    </subcellularLocation>
</comment>
<comment type="similarity">
    <text evidence="2">Belongs to the aspartate/ornithine carbamoyltransferase superfamily. OTCase family.</text>
</comment>
<dbReference type="EC" id="2.1.3.3" evidence="2"/>
<dbReference type="EMBL" id="BX640443">
    <property type="protein sequence ID" value="CAE32484.1"/>
    <property type="molecule type" value="Genomic_DNA"/>
</dbReference>
<dbReference type="RefSeq" id="WP_003812938.1">
    <property type="nucleotide sequence ID" value="NC_002927.3"/>
</dbReference>
<dbReference type="SMR" id="Q7WKW6"/>
<dbReference type="GeneID" id="93204329"/>
<dbReference type="KEGG" id="bbr:BB1987"/>
<dbReference type="eggNOG" id="COG0078">
    <property type="taxonomic scope" value="Bacteria"/>
</dbReference>
<dbReference type="HOGENOM" id="CLU_043846_3_2_4"/>
<dbReference type="UniPathway" id="UPA00068">
    <property type="reaction ID" value="UER00112"/>
</dbReference>
<dbReference type="Proteomes" id="UP000001027">
    <property type="component" value="Chromosome"/>
</dbReference>
<dbReference type="GO" id="GO:0005737">
    <property type="term" value="C:cytoplasm"/>
    <property type="evidence" value="ECO:0007669"/>
    <property type="project" value="UniProtKB-SubCell"/>
</dbReference>
<dbReference type="GO" id="GO:0016597">
    <property type="term" value="F:amino acid binding"/>
    <property type="evidence" value="ECO:0007669"/>
    <property type="project" value="InterPro"/>
</dbReference>
<dbReference type="GO" id="GO:0004585">
    <property type="term" value="F:ornithine carbamoyltransferase activity"/>
    <property type="evidence" value="ECO:0007669"/>
    <property type="project" value="UniProtKB-UniRule"/>
</dbReference>
<dbReference type="GO" id="GO:0042450">
    <property type="term" value="P:arginine biosynthetic process via ornithine"/>
    <property type="evidence" value="ECO:0007669"/>
    <property type="project" value="TreeGrafter"/>
</dbReference>
<dbReference type="GO" id="GO:0019240">
    <property type="term" value="P:citrulline biosynthetic process"/>
    <property type="evidence" value="ECO:0007669"/>
    <property type="project" value="TreeGrafter"/>
</dbReference>
<dbReference type="GO" id="GO:0006526">
    <property type="term" value="P:L-arginine biosynthetic process"/>
    <property type="evidence" value="ECO:0007669"/>
    <property type="project" value="UniProtKB-UniRule"/>
</dbReference>
<dbReference type="FunFam" id="3.40.50.1370:FF:000008">
    <property type="entry name" value="Ornithine carbamoyltransferase"/>
    <property type="match status" value="1"/>
</dbReference>
<dbReference type="Gene3D" id="3.40.50.1370">
    <property type="entry name" value="Aspartate/ornithine carbamoyltransferase"/>
    <property type="match status" value="2"/>
</dbReference>
<dbReference type="HAMAP" id="MF_01109">
    <property type="entry name" value="OTCase"/>
    <property type="match status" value="1"/>
</dbReference>
<dbReference type="InterPro" id="IPR006132">
    <property type="entry name" value="Asp/Orn_carbamoyltranf_P-bd"/>
</dbReference>
<dbReference type="InterPro" id="IPR006130">
    <property type="entry name" value="Asp/Orn_carbamoylTrfase"/>
</dbReference>
<dbReference type="InterPro" id="IPR036901">
    <property type="entry name" value="Asp/Orn_carbamoylTrfase_sf"/>
</dbReference>
<dbReference type="InterPro" id="IPR006131">
    <property type="entry name" value="Asp_carbamoyltransf_Asp/Orn-bd"/>
</dbReference>
<dbReference type="InterPro" id="IPR002292">
    <property type="entry name" value="Orn/put_carbamltrans"/>
</dbReference>
<dbReference type="InterPro" id="IPR024904">
    <property type="entry name" value="OTCase_ArgI"/>
</dbReference>
<dbReference type="NCBIfam" id="TIGR00658">
    <property type="entry name" value="orni_carb_tr"/>
    <property type="match status" value="1"/>
</dbReference>
<dbReference type="NCBIfam" id="NF001986">
    <property type="entry name" value="PRK00779.1"/>
    <property type="match status" value="1"/>
</dbReference>
<dbReference type="PANTHER" id="PTHR45753">
    <property type="entry name" value="ORNITHINE CARBAMOYLTRANSFERASE, MITOCHONDRIAL"/>
    <property type="match status" value="1"/>
</dbReference>
<dbReference type="PANTHER" id="PTHR45753:SF3">
    <property type="entry name" value="ORNITHINE TRANSCARBAMYLASE, MITOCHONDRIAL"/>
    <property type="match status" value="1"/>
</dbReference>
<dbReference type="Pfam" id="PF00185">
    <property type="entry name" value="OTCace"/>
    <property type="match status" value="1"/>
</dbReference>
<dbReference type="Pfam" id="PF02729">
    <property type="entry name" value="OTCace_N"/>
    <property type="match status" value="1"/>
</dbReference>
<dbReference type="PRINTS" id="PR00100">
    <property type="entry name" value="AOTCASE"/>
</dbReference>
<dbReference type="PRINTS" id="PR00102">
    <property type="entry name" value="OTCASE"/>
</dbReference>
<dbReference type="SUPFAM" id="SSF53671">
    <property type="entry name" value="Aspartate/ornithine carbamoyltransferase"/>
    <property type="match status" value="1"/>
</dbReference>
<dbReference type="PROSITE" id="PS00097">
    <property type="entry name" value="CARBAMOYLTRANSFERASE"/>
    <property type="match status" value="1"/>
</dbReference>
<accession>Q7WKW6</accession>
<keyword id="KW-0028">Amino-acid biosynthesis</keyword>
<keyword id="KW-0055">Arginine biosynthesis</keyword>
<keyword id="KW-0963">Cytoplasm</keyword>
<keyword id="KW-0808">Transferase</keyword>
<gene>
    <name evidence="2" type="primary">argF</name>
    <name type="ordered locus">BB1987</name>
</gene>
<evidence type="ECO:0000250" key="1"/>
<evidence type="ECO:0000255" key="2">
    <source>
        <dbReference type="HAMAP-Rule" id="MF_01109"/>
    </source>
</evidence>